<protein>
    <recommendedName>
        <fullName evidence="1">Proteasome-activating nucleotidase</fullName>
        <shortName evidence="1">PAN</shortName>
    </recommendedName>
    <alternativeName>
        <fullName evidence="1">Proteasomal ATPase</fullName>
    </alternativeName>
    <alternativeName>
        <fullName evidence="1">Proteasome regulatory ATPase</fullName>
    </alternativeName>
    <alternativeName>
        <fullName evidence="1">Proteasome regulatory particle</fullName>
    </alternativeName>
</protein>
<sequence length="398" mass="44964">MGDSEIQYLLEKLKKLEEDYYKLRELYRRLEDEKKFIESERIRYEREVRRLRSEVERLRSPPLLVGVVSDILEDGRVVVKSSTGPKFVVNTSQYINEEELKPGARVALNQQTLAIVNVLPTSKDPMVYGFEVEEKPEVSYEDIGGLDVQIEEIREAVELPLLKPELFAEVGIEPPKGVLLYGPPGTGKTLLAKAVANQTRATFIRVVGSEFVQKYIGEGARLVREVFQLAKEKAPSIIFIDELDAIAARRTNSDTSGDREVQRTMMQLLAELDGFDPRGDVKVIGATNRIDILDPAILRPGRFDRIIEVPLPTFEGRIQIFKIHTRKMKLAEDVDFKELARITEGASGADIKAICTEAGMFAIREERAKVTMLDFTKAIEKVLKKTTPIPDLKGVMFV</sequence>
<feature type="chain" id="PRO_0000084739" description="Proteasome-activating nucleotidase">
    <location>
        <begin position="1"/>
        <end position="398"/>
    </location>
</feature>
<feature type="region of interest" description="Docks into pockets in the proteasome alpha-ring to cause gate opening" evidence="1">
    <location>
        <begin position="396"/>
        <end position="398"/>
    </location>
</feature>
<feature type="coiled-coil region" evidence="1">
    <location>
        <begin position="3"/>
        <end position="60"/>
    </location>
</feature>
<feature type="binding site" evidence="1">
    <location>
        <begin position="185"/>
        <end position="190"/>
    </location>
    <ligand>
        <name>ATP</name>
        <dbReference type="ChEBI" id="CHEBI:30616"/>
    </ligand>
</feature>
<feature type="binding site" evidence="1">
    <location>
        <position position="324"/>
    </location>
    <ligand>
        <name>ATP</name>
        <dbReference type="ChEBI" id="CHEBI:30616"/>
    </ligand>
</feature>
<feature type="strand" evidence="3">
    <location>
        <begin position="63"/>
        <end position="71"/>
    </location>
</feature>
<feature type="strand" evidence="3">
    <location>
        <begin position="77"/>
        <end position="81"/>
    </location>
</feature>
<feature type="strand" evidence="3">
    <location>
        <begin position="86"/>
        <end position="89"/>
    </location>
</feature>
<feature type="turn" evidence="3">
    <location>
        <begin position="97"/>
        <end position="99"/>
    </location>
</feature>
<feature type="strand" evidence="3">
    <location>
        <begin position="105"/>
        <end position="109"/>
    </location>
</feature>
<feature type="turn" evidence="3">
    <location>
        <begin position="110"/>
        <end position="112"/>
    </location>
</feature>
<feature type="strand" evidence="3">
    <location>
        <begin position="115"/>
        <end position="119"/>
    </location>
</feature>
<name>PAN_ARCFU</name>
<reference key="1">
    <citation type="journal article" date="1997" name="Nature">
        <title>The complete genome sequence of the hyperthermophilic, sulphate-reducing archaeon Archaeoglobus fulgidus.</title>
        <authorList>
            <person name="Klenk H.-P."/>
            <person name="Clayton R.A."/>
            <person name="Tomb J.-F."/>
            <person name="White O."/>
            <person name="Nelson K.E."/>
            <person name="Ketchum K.A."/>
            <person name="Dodson R.J."/>
            <person name="Gwinn M.L."/>
            <person name="Hickey E.K."/>
            <person name="Peterson J.D."/>
            <person name="Richardson D.L."/>
            <person name="Kerlavage A.R."/>
            <person name="Graham D.E."/>
            <person name="Kyrpides N.C."/>
            <person name="Fleischmann R.D."/>
            <person name="Quackenbush J."/>
            <person name="Lee N.H."/>
            <person name="Sutton G.G."/>
            <person name="Gill S.R."/>
            <person name="Kirkness E.F."/>
            <person name="Dougherty B.A."/>
            <person name="McKenney K."/>
            <person name="Adams M.D."/>
            <person name="Loftus B.J."/>
            <person name="Peterson S.N."/>
            <person name="Reich C.I."/>
            <person name="McNeil L.K."/>
            <person name="Badger J.H."/>
            <person name="Glodek A."/>
            <person name="Zhou L."/>
            <person name="Overbeek R."/>
            <person name="Gocayne J.D."/>
            <person name="Weidman J.F."/>
            <person name="McDonald L.A."/>
            <person name="Utterback T.R."/>
            <person name="Cotton M.D."/>
            <person name="Spriggs T."/>
            <person name="Artiach P."/>
            <person name="Kaine B.P."/>
            <person name="Sykes S.M."/>
            <person name="Sadow P.W."/>
            <person name="D'Andrea K.P."/>
            <person name="Bowman C."/>
            <person name="Fujii C."/>
            <person name="Garland S.A."/>
            <person name="Mason T.M."/>
            <person name="Olsen G.J."/>
            <person name="Fraser C.M."/>
            <person name="Smith H.O."/>
            <person name="Woese C.R."/>
            <person name="Venter J.C."/>
        </authorList>
    </citation>
    <scope>NUCLEOTIDE SEQUENCE [LARGE SCALE GENOMIC DNA]</scope>
    <source>
        <strain>ATCC 49558 / DSM 4304 / JCM 9628 / NBRC 100126 / VC-16</strain>
    </source>
</reference>
<reference key="2">
    <citation type="journal article" date="2009" name="Mol. Cell">
        <title>Structure and activity of the N-terminal substrate recognition domains in proteasomal ATPases.</title>
        <authorList>
            <person name="Djuranovic S."/>
            <person name="Hartmann M.D."/>
            <person name="Habeck M."/>
            <person name="Ursinus A."/>
            <person name="Zwickl P."/>
            <person name="Martin J."/>
            <person name="Lupas A.N."/>
            <person name="Zeth K."/>
        </authorList>
    </citation>
    <scope>X-RAY CRYSTALLOGRAPHY (2.1 ANGSTROMS) OF 57-134 OF WILD-TYPE AND MUTANT ALA-61</scope>
    <scope>FUNCTION AS A CHAPERONE</scope>
    <scope>SUBUNIT</scope>
</reference>
<dbReference type="EMBL" id="AE000782">
    <property type="protein sequence ID" value="AAB89280.1"/>
    <property type="molecule type" value="Genomic_DNA"/>
</dbReference>
<dbReference type="PIR" id="G69496">
    <property type="entry name" value="G69496"/>
</dbReference>
<dbReference type="RefSeq" id="WP_010879468.1">
    <property type="nucleotide sequence ID" value="NC_000917.1"/>
</dbReference>
<dbReference type="PDB" id="2WG5">
    <property type="method" value="X-ray"/>
    <property type="resolution" value="2.10 A"/>
    <property type="chains" value="A/B/C/D/E/F/G/H/I/J/K/L=57-134"/>
</dbReference>
<dbReference type="PDB" id="2WG6">
    <property type="method" value="X-ray"/>
    <property type="resolution" value="2.50 A"/>
    <property type="chains" value="A/B/C/D/E/F/G/H/I/J/K/L=57-134"/>
</dbReference>
<dbReference type="PDB" id="6HE4">
    <property type="method" value="EM"/>
    <property type="resolution" value="4.85 A"/>
    <property type="chains" value="H/I/J/K/L/M=123-389"/>
</dbReference>
<dbReference type="PDB" id="6HE5">
    <property type="method" value="EM"/>
    <property type="resolution" value="4.12 A"/>
    <property type="chains" value="H/I/J/K/L/M=2-398"/>
</dbReference>
<dbReference type="PDB" id="6HE8">
    <property type="method" value="EM"/>
    <property type="resolution" value="6.86 A"/>
    <property type="chains" value="H/I/J/K/L/M=9-398"/>
</dbReference>
<dbReference type="PDB" id="6HE9">
    <property type="method" value="EM"/>
    <property type="resolution" value="6.35 A"/>
    <property type="chains" value="H/I/J/K/L/M=9-398"/>
</dbReference>
<dbReference type="PDB" id="6HEA">
    <property type="method" value="EM"/>
    <property type="resolution" value="7.04 A"/>
    <property type="chains" value="H/I/J/K/L/M=9-398"/>
</dbReference>
<dbReference type="PDB" id="6HEC">
    <property type="method" value="EM"/>
    <property type="resolution" value="6.95 A"/>
    <property type="chains" value="H/I/J/K/L/M=9-398"/>
</dbReference>
<dbReference type="PDB" id="6HED">
    <property type="method" value="EM"/>
    <property type="resolution" value="6.95 A"/>
    <property type="chains" value="H/I/J/K/L/M=9-398"/>
</dbReference>
<dbReference type="PDBsum" id="2WG5"/>
<dbReference type="PDBsum" id="2WG6"/>
<dbReference type="PDBsum" id="6HE4"/>
<dbReference type="PDBsum" id="6HE5"/>
<dbReference type="PDBsum" id="6HE8"/>
<dbReference type="PDBsum" id="6HE9"/>
<dbReference type="PDBsum" id="6HEA"/>
<dbReference type="PDBsum" id="6HEC"/>
<dbReference type="PDBsum" id="6HED"/>
<dbReference type="EMDB" id="EMD-0209"/>
<dbReference type="EMDB" id="EMD-0210"/>
<dbReference type="EMDB" id="EMD-0212"/>
<dbReference type="EMDB" id="EMD-0213"/>
<dbReference type="EMDB" id="EMD-0214"/>
<dbReference type="EMDB" id="EMD-0215"/>
<dbReference type="EMDB" id="EMD-0216"/>
<dbReference type="SMR" id="O28303"/>
<dbReference type="IntAct" id="O28303">
    <property type="interactions" value="2"/>
</dbReference>
<dbReference type="STRING" id="224325.AF_1976"/>
<dbReference type="PaxDb" id="224325-AF_1976"/>
<dbReference type="EnsemblBacteria" id="AAB89280">
    <property type="protein sequence ID" value="AAB89280"/>
    <property type="gene ID" value="AF_1976"/>
</dbReference>
<dbReference type="GeneID" id="24795719"/>
<dbReference type="KEGG" id="afu:AF_1976"/>
<dbReference type="eggNOG" id="arCOG01306">
    <property type="taxonomic scope" value="Archaea"/>
</dbReference>
<dbReference type="HOGENOM" id="CLU_000688_2_0_2"/>
<dbReference type="OrthoDB" id="77269at2157"/>
<dbReference type="PhylomeDB" id="O28303"/>
<dbReference type="BRENDA" id="5.6.1.5">
    <property type="organism ID" value="414"/>
</dbReference>
<dbReference type="EvolutionaryTrace" id="O28303"/>
<dbReference type="Proteomes" id="UP000002199">
    <property type="component" value="Chromosome"/>
</dbReference>
<dbReference type="GO" id="GO:0005737">
    <property type="term" value="C:cytoplasm"/>
    <property type="evidence" value="ECO:0007669"/>
    <property type="project" value="UniProtKB-SubCell"/>
</dbReference>
<dbReference type="GO" id="GO:0022623">
    <property type="term" value="C:proteasome-activating nucleotidase complex"/>
    <property type="evidence" value="ECO:0007669"/>
    <property type="project" value="UniProtKB-UniRule"/>
</dbReference>
<dbReference type="GO" id="GO:0005524">
    <property type="term" value="F:ATP binding"/>
    <property type="evidence" value="ECO:0007669"/>
    <property type="project" value="UniProtKB-UniRule"/>
</dbReference>
<dbReference type="GO" id="GO:0016887">
    <property type="term" value="F:ATP hydrolysis activity"/>
    <property type="evidence" value="ECO:0007669"/>
    <property type="project" value="UniProtKB-UniRule"/>
</dbReference>
<dbReference type="GO" id="GO:0010498">
    <property type="term" value="P:proteasomal protein catabolic process"/>
    <property type="evidence" value="ECO:0007669"/>
    <property type="project" value="UniProtKB-UniRule"/>
</dbReference>
<dbReference type="GO" id="GO:0043335">
    <property type="term" value="P:protein unfolding"/>
    <property type="evidence" value="ECO:0007669"/>
    <property type="project" value="UniProtKB-UniRule"/>
</dbReference>
<dbReference type="CDD" id="cd19502">
    <property type="entry name" value="RecA-like_PAN_like"/>
    <property type="match status" value="1"/>
</dbReference>
<dbReference type="FunFam" id="3.40.50.300:FF:000033">
    <property type="entry name" value="26S protease regulatory subunit 6B"/>
    <property type="match status" value="1"/>
</dbReference>
<dbReference type="FunFam" id="1.10.8.60:FF:000006">
    <property type="entry name" value="26S protease regulatory subunit 8"/>
    <property type="match status" value="1"/>
</dbReference>
<dbReference type="Gene3D" id="1.10.8.60">
    <property type="match status" value="1"/>
</dbReference>
<dbReference type="Gene3D" id="2.40.50.140">
    <property type="entry name" value="Nucleic acid-binding proteins"/>
    <property type="match status" value="1"/>
</dbReference>
<dbReference type="Gene3D" id="3.40.50.300">
    <property type="entry name" value="P-loop containing nucleotide triphosphate hydrolases"/>
    <property type="match status" value="1"/>
</dbReference>
<dbReference type="HAMAP" id="MF_00553">
    <property type="entry name" value="PAN"/>
    <property type="match status" value="1"/>
</dbReference>
<dbReference type="InterPro" id="IPR050221">
    <property type="entry name" value="26S_Proteasome_ATPase"/>
</dbReference>
<dbReference type="InterPro" id="IPR003593">
    <property type="entry name" value="AAA+_ATPase"/>
</dbReference>
<dbReference type="InterPro" id="IPR041569">
    <property type="entry name" value="AAA_lid_3"/>
</dbReference>
<dbReference type="InterPro" id="IPR003959">
    <property type="entry name" value="ATPase_AAA_core"/>
</dbReference>
<dbReference type="InterPro" id="IPR003960">
    <property type="entry name" value="ATPase_AAA_CS"/>
</dbReference>
<dbReference type="InterPro" id="IPR012340">
    <property type="entry name" value="NA-bd_OB-fold"/>
</dbReference>
<dbReference type="InterPro" id="IPR023501">
    <property type="entry name" value="Nucleotidase_PAN"/>
</dbReference>
<dbReference type="InterPro" id="IPR027417">
    <property type="entry name" value="P-loop_NTPase"/>
</dbReference>
<dbReference type="InterPro" id="IPR032501">
    <property type="entry name" value="Prot_ATP_ID_OB_2nd"/>
</dbReference>
<dbReference type="NCBIfam" id="NF003069">
    <property type="entry name" value="PRK03992.1"/>
    <property type="match status" value="1"/>
</dbReference>
<dbReference type="NCBIfam" id="TIGR01242">
    <property type="entry name" value="proteasome-activating nucleotidase"/>
    <property type="match status" value="1"/>
</dbReference>
<dbReference type="PANTHER" id="PTHR23073">
    <property type="entry name" value="26S PROTEASOME REGULATORY SUBUNIT"/>
    <property type="match status" value="1"/>
</dbReference>
<dbReference type="Pfam" id="PF00004">
    <property type="entry name" value="AAA"/>
    <property type="match status" value="1"/>
</dbReference>
<dbReference type="Pfam" id="PF17862">
    <property type="entry name" value="AAA_lid_3"/>
    <property type="match status" value="1"/>
</dbReference>
<dbReference type="Pfam" id="PF16450">
    <property type="entry name" value="Prot_ATP_ID_OB_C"/>
    <property type="match status" value="1"/>
</dbReference>
<dbReference type="SMART" id="SM00382">
    <property type="entry name" value="AAA"/>
    <property type="match status" value="1"/>
</dbReference>
<dbReference type="SUPFAM" id="SSF52540">
    <property type="entry name" value="P-loop containing nucleoside triphosphate hydrolases"/>
    <property type="match status" value="1"/>
</dbReference>
<dbReference type="PROSITE" id="PS00674">
    <property type="entry name" value="AAA"/>
    <property type="match status" value="1"/>
</dbReference>
<organism>
    <name type="scientific">Archaeoglobus fulgidus (strain ATCC 49558 / DSM 4304 / JCM 9628 / NBRC 100126 / VC-16)</name>
    <dbReference type="NCBI Taxonomy" id="224325"/>
    <lineage>
        <taxon>Archaea</taxon>
        <taxon>Methanobacteriati</taxon>
        <taxon>Methanobacteriota</taxon>
        <taxon>Archaeoglobi</taxon>
        <taxon>Archaeoglobales</taxon>
        <taxon>Archaeoglobaceae</taxon>
        <taxon>Archaeoglobus</taxon>
    </lineage>
</organism>
<comment type="function">
    <text evidence="2">ATPase which is responsible for recognizing, binding, unfolding and translocation of substrate proteins into the archaeal 20S proteasome core particle. Is essential for opening the gate of the 20S proteasome via an interaction with its C-terminus, thereby allowing substrate entry and access to the site of proteolysis. Thus, the C-termini of the proteasomal ATPase function like a 'key in a lock' to induce gate opening and therefore regulate proteolysis. Unfolding activity requires energy from ATP hydrolysis, whereas ATP binding alone promotes ATPase-20S proteasome association which triggers gate opening, and supports translocation of unfolded substrates (Probable).</text>
</comment>
<comment type="subunit">
    <text evidence="2">Homohexamer. The hexameric complex has a two-ring architecture resembling a top hat that caps the 20S proteasome core at one or both ends. Upon ATP-binding, the C-terminus of PAN interacts with the alpha-rings of the proteasome core by binding to the intersubunit pockets (Probable).</text>
</comment>
<comment type="subcellular location">
    <subcellularLocation>
        <location evidence="1">Cytoplasm</location>
    </subcellularLocation>
</comment>
<comment type="domain">
    <text evidence="1">Consists of three main regions, an N-terminal coiled-coil domain that may assist in substrate recognition, an interdomain involved in PAN hexamerization, and a C-terminal ATPase domain of the AAA type.</text>
</comment>
<comment type="similarity">
    <text evidence="1">Belongs to the AAA ATPase family.</text>
</comment>
<evidence type="ECO:0000255" key="1">
    <source>
        <dbReference type="HAMAP-Rule" id="MF_00553"/>
    </source>
</evidence>
<evidence type="ECO:0000305" key="2">
    <source>
    </source>
</evidence>
<evidence type="ECO:0007829" key="3">
    <source>
        <dbReference type="PDB" id="2WG5"/>
    </source>
</evidence>
<gene>
    <name evidence="1" type="primary">pan</name>
    <name type="ordered locus">AF_1976</name>
</gene>
<accession>O28303</accession>
<proteinExistence type="evidence at protein level"/>
<keyword id="KW-0002">3D-structure</keyword>
<keyword id="KW-0067">ATP-binding</keyword>
<keyword id="KW-0143">Chaperone</keyword>
<keyword id="KW-0175">Coiled coil</keyword>
<keyword id="KW-0963">Cytoplasm</keyword>
<keyword id="KW-0547">Nucleotide-binding</keyword>
<keyword id="KW-0647">Proteasome</keyword>
<keyword id="KW-1185">Reference proteome</keyword>